<proteinExistence type="inferred from homology"/>
<keyword id="KW-1185">Reference proteome</keyword>
<keyword id="KW-0687">Ribonucleoprotein</keyword>
<keyword id="KW-0689">Ribosomal protein</keyword>
<sequence>MARMHTRRRGSSGSDKPVADDPPEWSDIDADAIEERVVELAEQGHEPSQIGMKLRDEGVKGTPIPDVKLATDKKVTTILEEHNAKPELPEDLRNLMERAIRLRRHVDENGQDMQNKRALQNTESKIRRLASYYRGDELDEDFTYSFEVAVELLEAEEA</sequence>
<name>RS15_HALWD</name>
<dbReference type="EMBL" id="AM180088">
    <property type="protein sequence ID" value="CAJ52482.1"/>
    <property type="molecule type" value="Genomic_DNA"/>
</dbReference>
<dbReference type="RefSeq" id="WP_011571607.1">
    <property type="nucleotide sequence ID" value="NC_008212.1"/>
</dbReference>
<dbReference type="SMR" id="Q18HQ4"/>
<dbReference type="STRING" id="362976.HQ_2361A"/>
<dbReference type="GeneID" id="4194651"/>
<dbReference type="KEGG" id="hwa:HQ_2361A"/>
<dbReference type="eggNOG" id="arCOG04185">
    <property type="taxonomic scope" value="Archaea"/>
</dbReference>
<dbReference type="HOGENOM" id="CLU_090139_2_0_2"/>
<dbReference type="Proteomes" id="UP000001975">
    <property type="component" value="Chromosome"/>
</dbReference>
<dbReference type="GO" id="GO:0022627">
    <property type="term" value="C:cytosolic small ribosomal subunit"/>
    <property type="evidence" value="ECO:0007669"/>
    <property type="project" value="TreeGrafter"/>
</dbReference>
<dbReference type="GO" id="GO:0070181">
    <property type="term" value="F:small ribosomal subunit rRNA binding"/>
    <property type="evidence" value="ECO:0007669"/>
    <property type="project" value="TreeGrafter"/>
</dbReference>
<dbReference type="GO" id="GO:0003735">
    <property type="term" value="F:structural constituent of ribosome"/>
    <property type="evidence" value="ECO:0007669"/>
    <property type="project" value="InterPro"/>
</dbReference>
<dbReference type="GO" id="GO:0006412">
    <property type="term" value="P:translation"/>
    <property type="evidence" value="ECO:0007669"/>
    <property type="project" value="UniProtKB-UniRule"/>
</dbReference>
<dbReference type="CDD" id="cd00677">
    <property type="entry name" value="S15_NS1_EPRS_RNA-bind"/>
    <property type="match status" value="1"/>
</dbReference>
<dbReference type="Gene3D" id="4.10.860.130">
    <property type="match status" value="1"/>
</dbReference>
<dbReference type="Gene3D" id="1.10.287.10">
    <property type="entry name" value="S15/NS1, RNA-binding"/>
    <property type="match status" value="1"/>
</dbReference>
<dbReference type="HAMAP" id="MF_01343_A">
    <property type="entry name" value="Ribosomal_uS15_A"/>
    <property type="match status" value="1"/>
</dbReference>
<dbReference type="InterPro" id="IPR000589">
    <property type="entry name" value="Ribosomal_uS15"/>
</dbReference>
<dbReference type="InterPro" id="IPR023029">
    <property type="entry name" value="Ribosomal_uS15_arc_euk"/>
</dbReference>
<dbReference type="InterPro" id="IPR012606">
    <property type="entry name" value="Ribosomal_uS15_N"/>
</dbReference>
<dbReference type="InterPro" id="IPR009068">
    <property type="entry name" value="uS15_NS1_RNA-bd_sf"/>
</dbReference>
<dbReference type="NCBIfam" id="NF006331">
    <property type="entry name" value="PRK08561.1"/>
    <property type="match status" value="1"/>
</dbReference>
<dbReference type="PANTHER" id="PTHR11885">
    <property type="entry name" value="RIBOSOMAL PROTEIN S15P/S13E"/>
    <property type="match status" value="1"/>
</dbReference>
<dbReference type="PANTHER" id="PTHR11885:SF6">
    <property type="entry name" value="SMALL RIBOSOMAL SUBUNIT PROTEIN US15"/>
    <property type="match status" value="1"/>
</dbReference>
<dbReference type="Pfam" id="PF08069">
    <property type="entry name" value="Ribosomal_S13_N"/>
    <property type="match status" value="1"/>
</dbReference>
<dbReference type="Pfam" id="PF00312">
    <property type="entry name" value="Ribosomal_S15"/>
    <property type="match status" value="1"/>
</dbReference>
<dbReference type="SMART" id="SM01386">
    <property type="entry name" value="Ribosomal_S13_N"/>
    <property type="match status" value="1"/>
</dbReference>
<dbReference type="SMART" id="SM01387">
    <property type="entry name" value="Ribosomal_S15"/>
    <property type="match status" value="1"/>
</dbReference>
<dbReference type="SUPFAM" id="SSF47060">
    <property type="entry name" value="S15/NS1 RNA-binding domain"/>
    <property type="match status" value="1"/>
</dbReference>
<dbReference type="PROSITE" id="PS00362">
    <property type="entry name" value="RIBOSOMAL_S15"/>
    <property type="match status" value="1"/>
</dbReference>
<protein>
    <recommendedName>
        <fullName evidence="1">Small ribosomal subunit protein uS15</fullName>
    </recommendedName>
    <alternativeName>
        <fullName evidence="3">30S ribosomal protein S15</fullName>
    </alternativeName>
</protein>
<comment type="subunit">
    <text evidence="1">Part of the 30S ribosomal subunit.</text>
</comment>
<comment type="similarity">
    <text evidence="1">Belongs to the universal ribosomal protein uS15 family.</text>
</comment>
<gene>
    <name evidence="1" type="primary">rps15</name>
    <name type="ordered locus">HQ_2361A</name>
</gene>
<feature type="chain" id="PRO_0000255550" description="Small ribosomal subunit protein uS15">
    <location>
        <begin position="1"/>
        <end position="158"/>
    </location>
</feature>
<feature type="region of interest" description="Disordered" evidence="2">
    <location>
        <begin position="1"/>
        <end position="66"/>
    </location>
</feature>
<feature type="compositionally biased region" description="Basic residues" evidence="2">
    <location>
        <begin position="1"/>
        <end position="10"/>
    </location>
</feature>
<feature type="compositionally biased region" description="Acidic residues" evidence="2">
    <location>
        <begin position="21"/>
        <end position="32"/>
    </location>
</feature>
<feature type="compositionally biased region" description="Basic and acidic residues" evidence="2">
    <location>
        <begin position="33"/>
        <end position="45"/>
    </location>
</feature>
<reference key="1">
    <citation type="journal article" date="2006" name="BMC Genomics">
        <title>The genome of the square archaeon Haloquadratum walsbyi: life at the limits of water activity.</title>
        <authorList>
            <person name="Bolhuis H."/>
            <person name="Palm P."/>
            <person name="Wende A."/>
            <person name="Falb M."/>
            <person name="Rampp M."/>
            <person name="Rodriguez-Valera F."/>
            <person name="Pfeiffer F."/>
            <person name="Oesterhelt D."/>
        </authorList>
    </citation>
    <scope>NUCLEOTIDE SEQUENCE [LARGE SCALE GENOMIC DNA]</scope>
    <source>
        <strain>DSM 16790 / HBSQ001</strain>
    </source>
</reference>
<accession>Q18HQ4</accession>
<organism>
    <name type="scientific">Haloquadratum walsbyi (strain DSM 16790 / HBSQ001)</name>
    <dbReference type="NCBI Taxonomy" id="362976"/>
    <lineage>
        <taxon>Archaea</taxon>
        <taxon>Methanobacteriati</taxon>
        <taxon>Methanobacteriota</taxon>
        <taxon>Stenosarchaea group</taxon>
        <taxon>Halobacteria</taxon>
        <taxon>Halobacteriales</taxon>
        <taxon>Haloferacaceae</taxon>
        <taxon>Haloquadratum</taxon>
    </lineage>
</organism>
<evidence type="ECO:0000255" key="1">
    <source>
        <dbReference type="HAMAP-Rule" id="MF_01343"/>
    </source>
</evidence>
<evidence type="ECO:0000256" key="2">
    <source>
        <dbReference type="SAM" id="MobiDB-lite"/>
    </source>
</evidence>
<evidence type="ECO:0000305" key="3"/>